<comment type="function">
    <text evidence="1 2">Lanthionine-containing peptide antibiotic (lantibiotic) that is probably active on Gram-positive bacteria, since its analog [Del1]Flvbeta.e shows antibacterial activity against Gram-positive bacteria (PubMed:27028884). This activity is not synergistically enhanced by [Del2]Flvalpha.a, an analog of Flvalpha.a, which is encoded by the same operon than Flvbeta.e (PubMed:27028884). The bactericidal activity of lantibiotics is based on depolarization of energized bacterial cytoplasmic membranes, initiated by the formation of aqueous transmembrane pores (By similarity).</text>
</comment>
<comment type="subcellular location">
    <subcellularLocation>
        <location evidence="4">Secreted</location>
    </subcellularLocation>
</comment>
<comment type="PTM">
    <text evidence="2">Contains LL-lanthionine and DL-beta-methyllanthionine, when coepressed in E.coli with the flavecin synthetase FlvM2.</text>
</comment>
<protein>
    <recommendedName>
        <fullName evidence="3">Lantibiotic Flvbeta.e</fullName>
    </recommendedName>
</protein>
<proteinExistence type="inferred from homology"/>
<organism>
    <name type="scientific">Ruminococcus flavefaciens</name>
    <dbReference type="NCBI Taxonomy" id="1265"/>
    <lineage>
        <taxon>Bacteria</taxon>
        <taxon>Bacillati</taxon>
        <taxon>Bacillota</taxon>
        <taxon>Clostridia</taxon>
        <taxon>Eubacteriales</taxon>
        <taxon>Oscillospiraceae</taxon>
        <taxon>Ruminococcus</taxon>
    </lineage>
</organism>
<evidence type="ECO:0000250" key="1">
    <source>
        <dbReference type="UniProtKB" id="P86475"/>
    </source>
</evidence>
<evidence type="ECO:0000269" key="2">
    <source>
    </source>
</evidence>
<evidence type="ECO:0000303" key="3">
    <source>
    </source>
</evidence>
<evidence type="ECO:0000305" key="4"/>
<evidence type="ECO:0000305" key="5">
    <source>
    </source>
</evidence>
<name>LAN2E_RUMFL</name>
<gene>
    <name evidence="3" type="primary">FlvA2.e</name>
</gene>
<dbReference type="GO" id="GO:0005576">
    <property type="term" value="C:extracellular region"/>
    <property type="evidence" value="ECO:0007669"/>
    <property type="project" value="UniProtKB-SubCell"/>
</dbReference>
<dbReference type="GO" id="GO:0005102">
    <property type="term" value="F:signaling receptor binding"/>
    <property type="evidence" value="ECO:0007669"/>
    <property type="project" value="UniProtKB-KW"/>
</dbReference>
<dbReference type="GO" id="GO:0042742">
    <property type="term" value="P:defense response to bacterium"/>
    <property type="evidence" value="ECO:0007669"/>
    <property type="project" value="UniProtKB-KW"/>
</dbReference>
<dbReference type="GO" id="GO:0031640">
    <property type="term" value="P:killing of cells of another organism"/>
    <property type="evidence" value="ECO:0007669"/>
    <property type="project" value="UniProtKB-KW"/>
</dbReference>
<dbReference type="NCBIfam" id="NF038161">
    <property type="entry name" value="lant_II_LchA2"/>
    <property type="match status" value="1"/>
</dbReference>
<feature type="propeptide" id="PRO_0000450404" description="Cleaved by FlvT" evidence="5">
    <location>
        <begin position="1"/>
        <end position="34"/>
    </location>
</feature>
<feature type="peptide" id="PRO_0000450405" description="Lantibiotic Flvbeta.e" evidence="5">
    <location>
        <begin position="35"/>
        <end position="72"/>
    </location>
</feature>
<feature type="modified residue" description="2,3-didehydroalanine (Ser); by FlvM2" evidence="5">
    <location>
        <position position="37"/>
    </location>
</feature>
<feature type="modified residue" description="2,3-didehydrobutyrine; by FlvM2" evidence="5">
    <location>
        <position position="48"/>
    </location>
</feature>
<feature type="modified residue" description="2,3-didehydrobutyrine; by FlvM2" evidence="5">
    <location>
        <position position="49"/>
    </location>
</feature>
<feature type="cross-link" description="Lanthionine (Ser-Cys); by FlvM2" evidence="5">
    <location>
        <begin position="36"/>
        <end position="40"/>
    </location>
</feature>
<feature type="cross-link" description="Beta-methyllanthionine (Thr-Cys); by FlvM2" evidence="5">
    <location>
        <begin position="55"/>
        <end position="61"/>
    </location>
</feature>
<feature type="cross-link" description="Beta-methyllanthionine (Thr-Cys); by FlvM2" evidence="5">
    <location>
        <begin position="63"/>
        <end position="66"/>
    </location>
</feature>
<feature type="cross-link" description="Beta-methyllanthionine (Thr-Cys); by FlvM2" evidence="5">
    <location>
        <begin position="67"/>
        <end position="70"/>
    </location>
</feature>
<keyword id="KW-0044">Antibiotic</keyword>
<keyword id="KW-0929">Antimicrobial</keyword>
<keyword id="KW-0078">Bacteriocin</keyword>
<keyword id="KW-0425">Lantibiotic</keyword>
<keyword id="KW-0964">Secreted</keyword>
<keyword id="KW-0883">Thioether bond</keyword>
<reference key="1">
    <citation type="journal article" date="2016" name="Cell Chem. Biol.">
        <title>Structural characterization and bioactivity analysis of the two-component lantibiotic Flv system from a ruminant bacterium.</title>
        <authorList>
            <person name="Zhao X."/>
            <person name="van der Donk W.A."/>
        </authorList>
    </citation>
    <scope>NUCLEOTIDE SEQUENCE [GENOMIC DNA]</scope>
    <scope>EXPRESSION IN E.COLI</scope>
    <scope>DEHYDRATION AT SER-37; THR-48 AND THR-49</scope>
    <scope>LANTHIONINE AND METHYLLANTHIONINE CROSS-LINKS</scope>
    <source>
        <strain>FD-1</strain>
    </source>
</reference>
<accession>P0DQL7</accession>
<sequence>MNNKEFNMEQFKKLAAVVSEDELDEMLDENVTGAASSIPCAKVVVKVTTVVVAATTGFDWCPTGACTTSCRF</sequence>